<organism>
    <name type="scientific">Mus musculus</name>
    <name type="common">Mouse</name>
    <dbReference type="NCBI Taxonomy" id="10090"/>
    <lineage>
        <taxon>Eukaryota</taxon>
        <taxon>Metazoa</taxon>
        <taxon>Chordata</taxon>
        <taxon>Craniata</taxon>
        <taxon>Vertebrata</taxon>
        <taxon>Euteleostomi</taxon>
        <taxon>Mammalia</taxon>
        <taxon>Eutheria</taxon>
        <taxon>Euarchontoglires</taxon>
        <taxon>Glires</taxon>
        <taxon>Rodentia</taxon>
        <taxon>Myomorpha</taxon>
        <taxon>Muroidea</taxon>
        <taxon>Muridae</taxon>
        <taxon>Murinae</taxon>
        <taxon>Mus</taxon>
        <taxon>Mus</taxon>
    </lineage>
</organism>
<keyword id="KW-0067">ATP-binding</keyword>
<keyword id="KW-0963">Cytoplasm</keyword>
<keyword id="KW-0418">Kinase</keyword>
<keyword id="KW-0460">Magnesium</keyword>
<keyword id="KW-0472">Membrane</keyword>
<keyword id="KW-0479">Metal-binding</keyword>
<keyword id="KW-0547">Nucleotide-binding</keyword>
<keyword id="KW-0597">Phosphoprotein</keyword>
<keyword id="KW-1185">Reference proteome</keyword>
<keyword id="KW-0677">Repeat</keyword>
<keyword id="KW-0723">Serine/threonine-protein kinase</keyword>
<keyword id="KW-0808">Transferase</keyword>
<keyword id="KW-0862">Zinc</keyword>
<keyword id="KW-0863">Zinc-finger</keyword>
<name>KPCD3_MOUSE</name>
<reference key="1">
    <citation type="journal article" date="2004" name="Genome Res.">
        <title>The status, quality, and expansion of the NIH full-length cDNA project: the Mammalian Gene Collection (MGC).</title>
        <authorList>
            <consortium name="The MGC Project Team"/>
        </authorList>
    </citation>
    <scope>NUCLEOTIDE SEQUENCE [LARGE SCALE MRNA]</scope>
    <source>
        <strain>FVB/N</strain>
        <tissue>Mammary tumor</tissue>
    </source>
</reference>
<reference key="2">
    <citation type="journal article" date="2007" name="Proc. Natl. Acad. Sci. U.S.A.">
        <title>Large-scale phosphorylation analysis of mouse liver.</title>
        <authorList>
            <person name="Villen J."/>
            <person name="Beausoleil S.A."/>
            <person name="Gerber S.A."/>
            <person name="Gygi S.P."/>
        </authorList>
    </citation>
    <scope>PHOSPHORYLATION [LARGE SCALE ANALYSIS] AT SER-213 AND SER-216</scope>
    <scope>IDENTIFICATION BY MASS SPECTROMETRY [LARGE SCALE ANALYSIS]</scope>
    <source>
        <tissue>Liver</tissue>
    </source>
</reference>
<reference key="3">
    <citation type="journal article" date="2010" name="Cell">
        <title>A tissue-specific atlas of mouse protein phosphorylation and expression.</title>
        <authorList>
            <person name="Huttlin E.L."/>
            <person name="Jedrychowski M.P."/>
            <person name="Elias J.E."/>
            <person name="Goswami T."/>
            <person name="Rad R."/>
            <person name="Beausoleil S.A."/>
            <person name="Villen J."/>
            <person name="Haas W."/>
            <person name="Sowa M.E."/>
            <person name="Gygi S.P."/>
        </authorList>
    </citation>
    <scope>PHOSPHORYLATION [LARGE SCALE ANALYSIS] AT SER-27; SER-41; SER-44; THR-535 AND SER-539</scope>
    <scope>IDENTIFICATION BY MASS SPECTROMETRY [LARGE SCALE ANALYSIS]</scope>
    <source>
        <tissue>Brown adipose tissue</tissue>
        <tissue>Kidney</tissue>
        <tissue>Lung</tissue>
        <tissue>Spleen</tissue>
        <tissue>Testis</tissue>
    </source>
</reference>
<feature type="chain" id="PRO_0000055718" description="Serine/threonine-protein kinase D3">
    <location>
        <begin position="1"/>
        <end position="889"/>
    </location>
</feature>
<feature type="domain" description="PH" evidence="5">
    <location>
        <begin position="416"/>
        <end position="532"/>
    </location>
</feature>
<feature type="domain" description="Protein kinase" evidence="6">
    <location>
        <begin position="575"/>
        <end position="831"/>
    </location>
</feature>
<feature type="zinc finger region" description="Phorbol-ester/DAG-type 1" evidence="7">
    <location>
        <begin position="154"/>
        <end position="204"/>
    </location>
</feature>
<feature type="zinc finger region" description="Phorbol-ester/DAG-type 2" evidence="7">
    <location>
        <begin position="271"/>
        <end position="321"/>
    </location>
</feature>
<feature type="region of interest" description="Disordered" evidence="9">
    <location>
        <begin position="336"/>
        <end position="370"/>
    </location>
</feature>
<feature type="active site" description="Proton acceptor" evidence="6 8">
    <location>
        <position position="698"/>
    </location>
</feature>
<feature type="binding site" evidence="6">
    <location>
        <begin position="581"/>
        <end position="589"/>
    </location>
    <ligand>
        <name>ATP</name>
        <dbReference type="ChEBI" id="CHEBI:30616"/>
    </ligand>
</feature>
<feature type="binding site" evidence="6">
    <location>
        <position position="604"/>
    </location>
    <ligand>
        <name>ATP</name>
        <dbReference type="ChEBI" id="CHEBI:30616"/>
    </ligand>
</feature>
<feature type="modified residue" description="Phosphoserine" evidence="12">
    <location>
        <position position="27"/>
    </location>
</feature>
<feature type="modified residue" description="Phosphoserine" evidence="2">
    <location>
        <position position="37"/>
    </location>
</feature>
<feature type="modified residue" description="Phosphoserine" evidence="12">
    <location>
        <position position="41"/>
    </location>
</feature>
<feature type="modified residue" description="Phosphoserine" evidence="12">
    <location>
        <position position="44"/>
    </location>
</feature>
<feature type="modified residue" description="Phosphoserine" evidence="11">
    <location>
        <position position="213"/>
    </location>
</feature>
<feature type="modified residue" description="Phosphoserine" evidence="11">
    <location>
        <position position="216"/>
    </location>
</feature>
<feature type="modified residue" description="Phosphoserine" evidence="3">
    <location>
        <position position="346"/>
    </location>
</feature>
<feature type="modified residue" description="Phosphoserine" evidence="3">
    <location>
        <position position="391"/>
    </location>
</feature>
<feature type="modified residue" description="Phosphoserine" evidence="3">
    <location>
        <position position="395"/>
    </location>
</feature>
<feature type="modified residue" description="Phosphotyrosine" evidence="3">
    <location>
        <position position="426"/>
    </location>
</feature>
<feature type="modified residue" description="Phosphoserine" evidence="3">
    <location>
        <position position="442"/>
    </location>
</feature>
<feature type="modified residue" description="Phosphotyrosine" evidence="4">
    <location>
        <position position="457"/>
    </location>
</feature>
<feature type="modified residue" description="Phosphothreonine" evidence="12">
    <location>
        <position position="535"/>
    </location>
</feature>
<feature type="modified residue" description="Phosphoserine" evidence="12">
    <location>
        <position position="539"/>
    </location>
</feature>
<feature type="modified residue" description="Phosphoserine; by PKC" evidence="3">
    <location>
        <position position="730"/>
    </location>
</feature>
<feature type="modified residue" description="Phosphoserine; by autocatalysis" evidence="3">
    <location>
        <position position="734"/>
    </location>
</feature>
<feature type="modified residue" description="Phosphotyrosine" evidence="4">
    <location>
        <position position="741"/>
    </location>
</feature>
<accession>Q8K1Y2</accession>
<gene>
    <name type="primary">Prkd3</name>
    <name type="synonym">Prkcn</name>
</gene>
<sequence>MSANNSPPSAQKSVFPATVSAVLPAPSPCSSPKTGLSARLSNGSFSAPSLTNSRGSVHTVSFLLQIGLTRESVTIEAQELSLSAVKDLVCSIVYQKFPECGFFGMYDKILLFRHDMNSENILQLITSADEIHEGDLVEVVLSALATVEDFQIRPHALYVHSYKAPTFCDYCGEMLWGLVRQGLKCEGCGLNYHKRCAFKIPNNCSGVRKRRLSNVSLPGPGLSVPRPLQPECVPLLSEESHTHQEPSKRIPSWSGRPIWMEKMVMCRVKVPHTFAVHSYGRPTICQYCKRLLKGLFRQGMQCKDCKFNCHKRCASKVPRDCLGEVTFNGEPCSVGTDADMPMDIDSSDVNSDGSRGLDDSEEPSPPEDKMFFLDPTDLDVERDEETVKTISPSTSNNIPLMRVVQSIKHTKRRSSTVVKEGWMVHYTSRDNLRKRHYWRLDSKCLTLFQNESGSKYYKEIPLSEILRVSSPQDFTSISQGSNPHCFEIITDTVVYFVGENNGSSSHNPVLAATGVGLDVAQSWEKAIRQALMPVTPQASVCTSPGQGKDHNLATSISVSNCQVQENVDISSVYQIFADEVLGSGQFGIVYGGKHRKTGRDVAIKVIDKMRFPTKQESQLRNEVAILQNLHHPGIVNLECMFETPERVFVVMEKLHGDMLEMILSSEKSRLPERITKFMVTQILVALRNLHFKNIVHCDLKPENVLLASAEPFPQVKLCDFGFARIIGEKSFRRSVVGTPAYLAPEVLRSKGYNRSLDMWSVGVIVYVSLSGTFPFNEDEDINDQIQNAAFMYPPNPWREISSEAIDLINNLLQVKMRKRYSVDKSLSHPWLQDYQTWLDLREFETRIGERYITHESDDARWEIHAYTHNLEYPKHFIMAPNPDDMEEDP</sequence>
<evidence type="ECO:0000250" key="1"/>
<evidence type="ECO:0000250" key="2">
    <source>
        <dbReference type="UniProtKB" id="O94806"/>
    </source>
</evidence>
<evidence type="ECO:0000250" key="3">
    <source>
        <dbReference type="UniProtKB" id="Q15139"/>
    </source>
</evidence>
<evidence type="ECO:0000250" key="4">
    <source>
        <dbReference type="UniProtKB" id="Q9BZL6"/>
    </source>
</evidence>
<evidence type="ECO:0000255" key="5">
    <source>
        <dbReference type="PROSITE-ProRule" id="PRU00145"/>
    </source>
</evidence>
<evidence type="ECO:0000255" key="6">
    <source>
        <dbReference type="PROSITE-ProRule" id="PRU00159"/>
    </source>
</evidence>
<evidence type="ECO:0000255" key="7">
    <source>
        <dbReference type="PROSITE-ProRule" id="PRU00226"/>
    </source>
</evidence>
<evidence type="ECO:0000255" key="8">
    <source>
        <dbReference type="PROSITE-ProRule" id="PRU10027"/>
    </source>
</evidence>
<evidence type="ECO:0000256" key="9">
    <source>
        <dbReference type="SAM" id="MobiDB-lite"/>
    </source>
</evidence>
<evidence type="ECO:0000305" key="10"/>
<evidence type="ECO:0007744" key="11">
    <source>
    </source>
</evidence>
<evidence type="ECO:0007744" key="12">
    <source>
    </source>
</evidence>
<protein>
    <recommendedName>
        <fullName>Serine/threonine-protein kinase D3</fullName>
        <ecNumber>2.7.11.13</ecNumber>
    </recommendedName>
    <alternativeName>
        <fullName>Protein kinase C nu type</fullName>
    </alternativeName>
    <alternativeName>
        <fullName>nPKC-nu</fullName>
    </alternativeName>
</protein>
<comment type="function">
    <text evidence="1">Converts transient diacylglycerol (DAG) signals into prolonged physiological effects, downstream of PKC. Involved in resistance to oxidative stress (By similarity).</text>
</comment>
<comment type="catalytic activity">
    <reaction>
        <text>L-seryl-[protein] + ATP = O-phospho-L-seryl-[protein] + ADP + H(+)</text>
        <dbReference type="Rhea" id="RHEA:17989"/>
        <dbReference type="Rhea" id="RHEA-COMP:9863"/>
        <dbReference type="Rhea" id="RHEA-COMP:11604"/>
        <dbReference type="ChEBI" id="CHEBI:15378"/>
        <dbReference type="ChEBI" id="CHEBI:29999"/>
        <dbReference type="ChEBI" id="CHEBI:30616"/>
        <dbReference type="ChEBI" id="CHEBI:83421"/>
        <dbReference type="ChEBI" id="CHEBI:456216"/>
        <dbReference type="EC" id="2.7.11.13"/>
    </reaction>
</comment>
<comment type="catalytic activity">
    <reaction>
        <text>L-threonyl-[protein] + ATP = O-phospho-L-threonyl-[protein] + ADP + H(+)</text>
        <dbReference type="Rhea" id="RHEA:46608"/>
        <dbReference type="Rhea" id="RHEA-COMP:11060"/>
        <dbReference type="Rhea" id="RHEA-COMP:11605"/>
        <dbReference type="ChEBI" id="CHEBI:15378"/>
        <dbReference type="ChEBI" id="CHEBI:30013"/>
        <dbReference type="ChEBI" id="CHEBI:30616"/>
        <dbReference type="ChEBI" id="CHEBI:61977"/>
        <dbReference type="ChEBI" id="CHEBI:456216"/>
        <dbReference type="EC" id="2.7.11.13"/>
    </reaction>
</comment>
<comment type="cofactor">
    <cofactor evidence="1">
        <name>Mg(2+)</name>
        <dbReference type="ChEBI" id="CHEBI:18420"/>
    </cofactor>
</comment>
<comment type="activity regulation">
    <text>Activated by DAG and phorbol esters. Phorbol-ester/DAG-type domains 1 and 2 bind both DAG and phorbol ester with high affinity and mediate translocation to the cell membrane. Autophosphorylation of Ser-734 and phosphorylation of Ser-730 by PKC relieves auto-inhibition by the PH domain.</text>
</comment>
<comment type="subcellular location">
    <subcellularLocation>
        <location evidence="1">Cytoplasm</location>
    </subcellularLocation>
    <subcellularLocation>
        <location evidence="1">Membrane</location>
    </subcellularLocation>
    <text evidence="1">Translocation to the cell membrane is required for kinase activation.</text>
</comment>
<comment type="similarity">
    <text evidence="10">Belongs to the protein kinase superfamily. CAMK Ser/Thr protein kinase family. PKD subfamily.</text>
</comment>
<proteinExistence type="evidence at protein level"/>
<dbReference type="EC" id="2.7.11.13"/>
<dbReference type="EMBL" id="BC037012">
    <property type="protein sequence ID" value="AAH37012.1"/>
    <property type="molecule type" value="mRNA"/>
</dbReference>
<dbReference type="CCDS" id="CCDS37699.1"/>
<dbReference type="RefSeq" id="NP_083515.2">
    <property type="nucleotide sequence ID" value="NM_029239.3"/>
</dbReference>
<dbReference type="SMR" id="Q8K1Y2"/>
<dbReference type="BioGRID" id="217368">
    <property type="interactions" value="1"/>
</dbReference>
<dbReference type="FunCoup" id="Q8K1Y2">
    <property type="interactions" value="4099"/>
</dbReference>
<dbReference type="STRING" id="10090.ENSMUSP00000113395"/>
<dbReference type="GlyGen" id="Q8K1Y2">
    <property type="glycosylation" value="2 sites, 2 N-linked glycans (2 sites)"/>
</dbReference>
<dbReference type="iPTMnet" id="Q8K1Y2"/>
<dbReference type="PhosphoSitePlus" id="Q8K1Y2"/>
<dbReference type="SwissPalm" id="Q8K1Y2"/>
<dbReference type="jPOST" id="Q8K1Y2"/>
<dbReference type="PaxDb" id="10090-ENSMUSP00000113395"/>
<dbReference type="ProteomicsDB" id="263645"/>
<dbReference type="Pumba" id="Q8K1Y2"/>
<dbReference type="Antibodypedia" id="14569">
    <property type="antibodies" value="413 antibodies from 37 providers"/>
</dbReference>
<dbReference type="DNASU" id="75292"/>
<dbReference type="Ensembl" id="ENSMUST00000003191.14">
    <property type="protein sequence ID" value="ENSMUSP00000003191.8"/>
    <property type="gene ID" value="ENSMUSG00000024070.16"/>
</dbReference>
<dbReference type="Ensembl" id="ENSMUST00000168887.8">
    <property type="protein sequence ID" value="ENSMUSP00000132004.2"/>
    <property type="gene ID" value="ENSMUSG00000024070.16"/>
</dbReference>
<dbReference type="GeneID" id="75292"/>
<dbReference type="KEGG" id="mmu:75292"/>
<dbReference type="UCSC" id="uc008dpr.2">
    <property type="organism name" value="mouse"/>
</dbReference>
<dbReference type="AGR" id="MGI:1922542"/>
<dbReference type="CTD" id="23683"/>
<dbReference type="MGI" id="MGI:1922542">
    <property type="gene designation" value="Prkd3"/>
</dbReference>
<dbReference type="VEuPathDB" id="HostDB:ENSMUSG00000024070"/>
<dbReference type="eggNOG" id="KOG4236">
    <property type="taxonomic scope" value="Eukaryota"/>
</dbReference>
<dbReference type="GeneTree" id="ENSGT00950000183024"/>
<dbReference type="InParanoid" id="Q8K1Y2"/>
<dbReference type="OMA" id="PKVPRDC"/>
<dbReference type="OrthoDB" id="74314at2759"/>
<dbReference type="PhylomeDB" id="Q8K1Y2"/>
<dbReference type="BioGRID-ORCS" id="75292">
    <property type="hits" value="4 hits in 79 CRISPR screens"/>
</dbReference>
<dbReference type="ChiTaRS" id="Prkd3">
    <property type="organism name" value="mouse"/>
</dbReference>
<dbReference type="PRO" id="PR:Q8K1Y2"/>
<dbReference type="Proteomes" id="UP000000589">
    <property type="component" value="Chromosome 17"/>
</dbReference>
<dbReference type="RNAct" id="Q8K1Y2">
    <property type="molecule type" value="protein"/>
</dbReference>
<dbReference type="Bgee" id="ENSMUSG00000024070">
    <property type="expression patterns" value="Expressed in rostral migratory stream and 261 other cell types or tissues"/>
</dbReference>
<dbReference type="ExpressionAtlas" id="Q8K1Y2">
    <property type="expression patterns" value="baseline and differential"/>
</dbReference>
<dbReference type="GO" id="GO:0005737">
    <property type="term" value="C:cytoplasm"/>
    <property type="evidence" value="ECO:0007669"/>
    <property type="project" value="UniProtKB-SubCell"/>
</dbReference>
<dbReference type="GO" id="GO:0016020">
    <property type="term" value="C:membrane"/>
    <property type="evidence" value="ECO:0007669"/>
    <property type="project" value="UniProtKB-SubCell"/>
</dbReference>
<dbReference type="GO" id="GO:0005524">
    <property type="term" value="F:ATP binding"/>
    <property type="evidence" value="ECO:0007669"/>
    <property type="project" value="UniProtKB-KW"/>
</dbReference>
<dbReference type="GO" id="GO:0004697">
    <property type="term" value="F:diacylglycerol-dependent serine/threonine kinase activity"/>
    <property type="evidence" value="ECO:0007669"/>
    <property type="project" value="UniProtKB-EC"/>
</dbReference>
<dbReference type="GO" id="GO:0106310">
    <property type="term" value="F:protein serine kinase activity"/>
    <property type="evidence" value="ECO:0007669"/>
    <property type="project" value="RHEA"/>
</dbReference>
<dbReference type="GO" id="GO:0008270">
    <property type="term" value="F:zinc ion binding"/>
    <property type="evidence" value="ECO:0007669"/>
    <property type="project" value="UniProtKB-KW"/>
</dbReference>
<dbReference type="CDD" id="cd20841">
    <property type="entry name" value="C1_PKD3_rpt1"/>
    <property type="match status" value="1"/>
</dbReference>
<dbReference type="CDD" id="cd01239">
    <property type="entry name" value="PH_PKD"/>
    <property type="match status" value="1"/>
</dbReference>
<dbReference type="CDD" id="cd14082">
    <property type="entry name" value="STKc_PKD"/>
    <property type="match status" value="1"/>
</dbReference>
<dbReference type="FunFam" id="1.10.510.10:FF:000151">
    <property type="entry name" value="Serine/threonine-protein kinase"/>
    <property type="match status" value="1"/>
</dbReference>
<dbReference type="FunFam" id="2.30.29.30:FF:000056">
    <property type="entry name" value="Serine/threonine-protein kinase"/>
    <property type="match status" value="1"/>
</dbReference>
<dbReference type="FunFam" id="3.30.200.20:FF:000137">
    <property type="entry name" value="Serine/threonine-protein kinase"/>
    <property type="match status" value="1"/>
</dbReference>
<dbReference type="FunFam" id="3.30.60.20:FF:000007">
    <property type="entry name" value="Serine/threonine-protein kinase"/>
    <property type="match status" value="1"/>
</dbReference>
<dbReference type="FunFam" id="3.30.60.20:FF:000019">
    <property type="entry name" value="Serine/threonine-protein kinase"/>
    <property type="match status" value="1"/>
</dbReference>
<dbReference type="Gene3D" id="3.30.60.20">
    <property type="match status" value="2"/>
</dbReference>
<dbReference type="Gene3D" id="3.30.200.20">
    <property type="entry name" value="Phosphorylase Kinase, domain 1"/>
    <property type="match status" value="1"/>
</dbReference>
<dbReference type="Gene3D" id="2.30.29.30">
    <property type="entry name" value="Pleckstrin-homology domain (PH domain)/Phosphotyrosine-binding domain (PTB)"/>
    <property type="match status" value="1"/>
</dbReference>
<dbReference type="Gene3D" id="1.10.510.10">
    <property type="entry name" value="Transferase(Phosphotransferase) domain 1"/>
    <property type="match status" value="1"/>
</dbReference>
<dbReference type="InterPro" id="IPR046349">
    <property type="entry name" value="C1-like_sf"/>
</dbReference>
<dbReference type="InterPro" id="IPR020454">
    <property type="entry name" value="DAG/PE-bd"/>
</dbReference>
<dbReference type="InterPro" id="IPR011009">
    <property type="entry name" value="Kinase-like_dom_sf"/>
</dbReference>
<dbReference type="InterPro" id="IPR002219">
    <property type="entry name" value="PE/DAG-bd"/>
</dbReference>
<dbReference type="InterPro" id="IPR011993">
    <property type="entry name" value="PH-like_dom_sf"/>
</dbReference>
<dbReference type="InterPro" id="IPR001849">
    <property type="entry name" value="PH_domain"/>
</dbReference>
<dbReference type="InterPro" id="IPR000719">
    <property type="entry name" value="Prot_kinase_dom"/>
</dbReference>
<dbReference type="InterPro" id="IPR017441">
    <property type="entry name" value="Protein_kinase_ATP_BS"/>
</dbReference>
<dbReference type="InterPro" id="IPR015727">
    <property type="entry name" value="Protein_Kinase_C_mu-related"/>
</dbReference>
<dbReference type="InterPro" id="IPR008271">
    <property type="entry name" value="Ser/Thr_kinase_AS"/>
</dbReference>
<dbReference type="PANTHER" id="PTHR22968">
    <property type="entry name" value="PROTEIN KINASE C, MU"/>
    <property type="match status" value="1"/>
</dbReference>
<dbReference type="PANTHER" id="PTHR22968:SF26">
    <property type="entry name" value="SERINE_THREONINE-PROTEIN KINASE D3"/>
    <property type="match status" value="1"/>
</dbReference>
<dbReference type="Pfam" id="PF00130">
    <property type="entry name" value="C1_1"/>
    <property type="match status" value="2"/>
</dbReference>
<dbReference type="Pfam" id="PF00169">
    <property type="entry name" value="PH"/>
    <property type="match status" value="1"/>
</dbReference>
<dbReference type="Pfam" id="PF00069">
    <property type="entry name" value="Pkinase"/>
    <property type="match status" value="1"/>
</dbReference>
<dbReference type="PIRSF" id="PIRSF000552">
    <property type="entry name" value="PKC_mu_nu_D2"/>
    <property type="match status" value="1"/>
</dbReference>
<dbReference type="PRINTS" id="PR00008">
    <property type="entry name" value="DAGPEDOMAIN"/>
</dbReference>
<dbReference type="SMART" id="SM00109">
    <property type="entry name" value="C1"/>
    <property type="match status" value="2"/>
</dbReference>
<dbReference type="SMART" id="SM00233">
    <property type="entry name" value="PH"/>
    <property type="match status" value="1"/>
</dbReference>
<dbReference type="SMART" id="SM00220">
    <property type="entry name" value="S_TKc"/>
    <property type="match status" value="1"/>
</dbReference>
<dbReference type="SUPFAM" id="SSF57889">
    <property type="entry name" value="Cysteine-rich domain"/>
    <property type="match status" value="2"/>
</dbReference>
<dbReference type="SUPFAM" id="SSF50729">
    <property type="entry name" value="PH domain-like"/>
    <property type="match status" value="1"/>
</dbReference>
<dbReference type="SUPFAM" id="SSF56112">
    <property type="entry name" value="Protein kinase-like (PK-like)"/>
    <property type="match status" value="1"/>
</dbReference>
<dbReference type="PROSITE" id="PS50003">
    <property type="entry name" value="PH_DOMAIN"/>
    <property type="match status" value="1"/>
</dbReference>
<dbReference type="PROSITE" id="PS00107">
    <property type="entry name" value="PROTEIN_KINASE_ATP"/>
    <property type="match status" value="1"/>
</dbReference>
<dbReference type="PROSITE" id="PS50011">
    <property type="entry name" value="PROTEIN_KINASE_DOM"/>
    <property type="match status" value="1"/>
</dbReference>
<dbReference type="PROSITE" id="PS00108">
    <property type="entry name" value="PROTEIN_KINASE_ST"/>
    <property type="match status" value="1"/>
</dbReference>
<dbReference type="PROSITE" id="PS00479">
    <property type="entry name" value="ZF_DAG_PE_1"/>
    <property type="match status" value="2"/>
</dbReference>
<dbReference type="PROSITE" id="PS50081">
    <property type="entry name" value="ZF_DAG_PE_2"/>
    <property type="match status" value="2"/>
</dbReference>